<protein>
    <recommendedName>
        <fullName evidence="1">Aminomethyltransferase</fullName>
        <ecNumber evidence="1">2.1.2.10</ecNumber>
    </recommendedName>
    <alternativeName>
        <fullName evidence="1">Glycine cleavage system T protein</fullName>
    </alternativeName>
</protein>
<keyword id="KW-0032">Aminotransferase</keyword>
<keyword id="KW-0808">Transferase</keyword>
<comment type="function">
    <text evidence="1">The glycine cleavage system catalyzes the degradation of glycine.</text>
</comment>
<comment type="catalytic activity">
    <reaction evidence="1">
        <text>N(6)-[(R)-S(8)-aminomethyldihydrolipoyl]-L-lysyl-[protein] + (6S)-5,6,7,8-tetrahydrofolate = N(6)-[(R)-dihydrolipoyl]-L-lysyl-[protein] + (6R)-5,10-methylene-5,6,7,8-tetrahydrofolate + NH4(+)</text>
        <dbReference type="Rhea" id="RHEA:16945"/>
        <dbReference type="Rhea" id="RHEA-COMP:10475"/>
        <dbReference type="Rhea" id="RHEA-COMP:10492"/>
        <dbReference type="ChEBI" id="CHEBI:15636"/>
        <dbReference type="ChEBI" id="CHEBI:28938"/>
        <dbReference type="ChEBI" id="CHEBI:57453"/>
        <dbReference type="ChEBI" id="CHEBI:83100"/>
        <dbReference type="ChEBI" id="CHEBI:83143"/>
        <dbReference type="EC" id="2.1.2.10"/>
    </reaction>
</comment>
<comment type="subunit">
    <text evidence="1">The glycine cleavage system is composed of four proteins: P, T, L and H.</text>
</comment>
<comment type="similarity">
    <text evidence="1">Belongs to the GcvT family.</text>
</comment>
<name>GCST_STAAR</name>
<evidence type="ECO:0000255" key="1">
    <source>
        <dbReference type="HAMAP-Rule" id="MF_00259"/>
    </source>
</evidence>
<reference key="1">
    <citation type="journal article" date="2004" name="Proc. Natl. Acad. Sci. U.S.A.">
        <title>Complete genomes of two clinical Staphylococcus aureus strains: evidence for the rapid evolution of virulence and drug resistance.</title>
        <authorList>
            <person name="Holden M.T.G."/>
            <person name="Feil E.J."/>
            <person name="Lindsay J.A."/>
            <person name="Peacock S.J."/>
            <person name="Day N.P.J."/>
            <person name="Enright M.C."/>
            <person name="Foster T.J."/>
            <person name="Moore C.E."/>
            <person name="Hurst L."/>
            <person name="Atkin R."/>
            <person name="Barron A."/>
            <person name="Bason N."/>
            <person name="Bentley S.D."/>
            <person name="Chillingworth C."/>
            <person name="Chillingworth T."/>
            <person name="Churcher C."/>
            <person name="Clark L."/>
            <person name="Corton C."/>
            <person name="Cronin A."/>
            <person name="Doggett J."/>
            <person name="Dowd L."/>
            <person name="Feltwell T."/>
            <person name="Hance Z."/>
            <person name="Harris B."/>
            <person name="Hauser H."/>
            <person name="Holroyd S."/>
            <person name="Jagels K."/>
            <person name="James K.D."/>
            <person name="Lennard N."/>
            <person name="Line A."/>
            <person name="Mayes R."/>
            <person name="Moule S."/>
            <person name="Mungall K."/>
            <person name="Ormond D."/>
            <person name="Quail M.A."/>
            <person name="Rabbinowitsch E."/>
            <person name="Rutherford K.M."/>
            <person name="Sanders M."/>
            <person name="Sharp S."/>
            <person name="Simmonds M."/>
            <person name="Stevens K."/>
            <person name="Whitehead S."/>
            <person name="Barrell B.G."/>
            <person name="Spratt B.G."/>
            <person name="Parkhill J."/>
        </authorList>
    </citation>
    <scope>NUCLEOTIDE SEQUENCE [LARGE SCALE GENOMIC DNA]</scope>
    <source>
        <strain>MRSA252</strain>
    </source>
</reference>
<sequence>MSSDLKQTPLYQNYVDRGAKIVEFGGWAMPVQFSSIKEEHNAVRYEIGLFDVSHMGEIEVTGKDASQFVQYLLSNDTDNLTTSKALYTALCNEEGGIIDDLVIYKLADDNYLLVVNAANTEKDFNWILKHKEKFDVEVQNVSNQYGQLAIQGPKARDLINQLVDEDVTEMKMFEFKQGVKLFGAIVILSQSGYTGEDGFEIYCNIDDTEKIWDGLLEYNVMPCGLGARDTLRLEAGLPLHGQDLTESITPYEGGIAFASKPLIDADFIGKSVLKDQKENGAPRRTVGLELLEKGIARTGYEVMDLDGNIIGEVTSGTQSPSSGKSIALAMIKRDEFEMGRELLVQVRKRQLKAKIVKKNQIDK</sequence>
<accession>Q6GGG2</accession>
<organism>
    <name type="scientific">Staphylococcus aureus (strain MRSA252)</name>
    <dbReference type="NCBI Taxonomy" id="282458"/>
    <lineage>
        <taxon>Bacteria</taxon>
        <taxon>Bacillati</taxon>
        <taxon>Bacillota</taxon>
        <taxon>Bacilli</taxon>
        <taxon>Bacillales</taxon>
        <taxon>Staphylococcaceae</taxon>
        <taxon>Staphylococcus</taxon>
    </lineage>
</organism>
<dbReference type="EC" id="2.1.2.10" evidence="1"/>
<dbReference type="EMBL" id="BX571856">
    <property type="protein sequence ID" value="CAG40609.1"/>
    <property type="molecule type" value="Genomic_DNA"/>
</dbReference>
<dbReference type="RefSeq" id="WP_000093347.1">
    <property type="nucleotide sequence ID" value="NC_002952.2"/>
</dbReference>
<dbReference type="SMR" id="Q6GGG2"/>
<dbReference type="KEGG" id="sar:SAR1614"/>
<dbReference type="HOGENOM" id="CLU_007884_10_2_9"/>
<dbReference type="Proteomes" id="UP000000596">
    <property type="component" value="Chromosome"/>
</dbReference>
<dbReference type="GO" id="GO:0005829">
    <property type="term" value="C:cytosol"/>
    <property type="evidence" value="ECO:0007669"/>
    <property type="project" value="TreeGrafter"/>
</dbReference>
<dbReference type="GO" id="GO:0005960">
    <property type="term" value="C:glycine cleavage complex"/>
    <property type="evidence" value="ECO:0007669"/>
    <property type="project" value="InterPro"/>
</dbReference>
<dbReference type="GO" id="GO:0004047">
    <property type="term" value="F:aminomethyltransferase activity"/>
    <property type="evidence" value="ECO:0007669"/>
    <property type="project" value="UniProtKB-UniRule"/>
</dbReference>
<dbReference type="GO" id="GO:0008483">
    <property type="term" value="F:transaminase activity"/>
    <property type="evidence" value="ECO:0007669"/>
    <property type="project" value="UniProtKB-KW"/>
</dbReference>
<dbReference type="GO" id="GO:0019464">
    <property type="term" value="P:glycine decarboxylation via glycine cleavage system"/>
    <property type="evidence" value="ECO:0007669"/>
    <property type="project" value="UniProtKB-UniRule"/>
</dbReference>
<dbReference type="FunFam" id="2.40.30.110:FF:000007">
    <property type="entry name" value="Aminomethyltransferase"/>
    <property type="match status" value="1"/>
</dbReference>
<dbReference type="FunFam" id="3.30.70.1400:FF:000001">
    <property type="entry name" value="Aminomethyltransferase"/>
    <property type="match status" value="1"/>
</dbReference>
<dbReference type="FunFam" id="4.10.1250.10:FF:000001">
    <property type="entry name" value="Aminomethyltransferase"/>
    <property type="match status" value="1"/>
</dbReference>
<dbReference type="Gene3D" id="2.40.30.110">
    <property type="entry name" value="Aminomethyltransferase beta-barrel domains"/>
    <property type="match status" value="1"/>
</dbReference>
<dbReference type="Gene3D" id="3.30.70.1400">
    <property type="entry name" value="Aminomethyltransferase beta-barrel domains"/>
    <property type="match status" value="1"/>
</dbReference>
<dbReference type="Gene3D" id="4.10.1250.10">
    <property type="entry name" value="Aminomethyltransferase fragment"/>
    <property type="match status" value="1"/>
</dbReference>
<dbReference type="Gene3D" id="3.30.1360.120">
    <property type="entry name" value="Probable tRNA modification gtpase trme, domain 1"/>
    <property type="match status" value="1"/>
</dbReference>
<dbReference type="HAMAP" id="MF_00259">
    <property type="entry name" value="GcvT"/>
    <property type="match status" value="1"/>
</dbReference>
<dbReference type="InterPro" id="IPR006223">
    <property type="entry name" value="GCS_T"/>
</dbReference>
<dbReference type="InterPro" id="IPR022903">
    <property type="entry name" value="GCS_T_bac"/>
</dbReference>
<dbReference type="InterPro" id="IPR013977">
    <property type="entry name" value="GCST_C"/>
</dbReference>
<dbReference type="InterPro" id="IPR006222">
    <property type="entry name" value="GCV_T_N"/>
</dbReference>
<dbReference type="InterPro" id="IPR028896">
    <property type="entry name" value="GcvT/YgfZ/DmdA"/>
</dbReference>
<dbReference type="InterPro" id="IPR029043">
    <property type="entry name" value="GcvT/YgfZ_C"/>
</dbReference>
<dbReference type="InterPro" id="IPR027266">
    <property type="entry name" value="TrmE/GcvT_dom1"/>
</dbReference>
<dbReference type="NCBIfam" id="TIGR00528">
    <property type="entry name" value="gcvT"/>
    <property type="match status" value="1"/>
</dbReference>
<dbReference type="NCBIfam" id="NF001567">
    <property type="entry name" value="PRK00389.1"/>
    <property type="match status" value="1"/>
</dbReference>
<dbReference type="PANTHER" id="PTHR43757">
    <property type="entry name" value="AMINOMETHYLTRANSFERASE"/>
    <property type="match status" value="1"/>
</dbReference>
<dbReference type="PANTHER" id="PTHR43757:SF2">
    <property type="entry name" value="AMINOMETHYLTRANSFERASE, MITOCHONDRIAL"/>
    <property type="match status" value="1"/>
</dbReference>
<dbReference type="Pfam" id="PF01571">
    <property type="entry name" value="GCV_T"/>
    <property type="match status" value="1"/>
</dbReference>
<dbReference type="Pfam" id="PF08669">
    <property type="entry name" value="GCV_T_C"/>
    <property type="match status" value="1"/>
</dbReference>
<dbReference type="PIRSF" id="PIRSF006487">
    <property type="entry name" value="GcvT"/>
    <property type="match status" value="1"/>
</dbReference>
<dbReference type="SUPFAM" id="SSF101790">
    <property type="entry name" value="Aminomethyltransferase beta-barrel domain"/>
    <property type="match status" value="1"/>
</dbReference>
<dbReference type="SUPFAM" id="SSF103025">
    <property type="entry name" value="Folate-binding domain"/>
    <property type="match status" value="1"/>
</dbReference>
<gene>
    <name evidence="1" type="primary">gcvT</name>
    <name type="ordered locus">SAR1614</name>
</gene>
<proteinExistence type="inferred from homology"/>
<feature type="chain" id="PRO_0000122598" description="Aminomethyltransferase">
    <location>
        <begin position="1"/>
        <end position="363"/>
    </location>
</feature>